<sequence length="187" mass="20367">MADTSDFKNGLVLKIDGQLQQIVEFQHVKPGKGPAFVRTKLKNVVSGKIVDKTFNAGVKVETATVDRRDMTYLYHDGSDYVFMDGETFDQISISEATIGSSARFLLENMAVQVAMHEGAPLYVELPVSVELEVTHTDIGLQGDRSTGGTKPATLETGAEVQVPLFINTGDKLRIDSRDGSYLGRVNA</sequence>
<proteinExistence type="inferred from homology"/>
<reference key="1">
    <citation type="journal article" date="2004" name="Proc. Natl. Acad. Sci. U.S.A.">
        <title>The complete genomic sequence of Nocardia farcinica IFM 10152.</title>
        <authorList>
            <person name="Ishikawa J."/>
            <person name="Yamashita A."/>
            <person name="Mikami Y."/>
            <person name="Hoshino Y."/>
            <person name="Kurita H."/>
            <person name="Hotta K."/>
            <person name="Shiba T."/>
            <person name="Hattori M."/>
        </authorList>
    </citation>
    <scope>NUCLEOTIDE SEQUENCE [LARGE SCALE GENOMIC DNA]</scope>
    <source>
        <strain>IFM 10152</strain>
    </source>
</reference>
<dbReference type="EMBL" id="AP006618">
    <property type="protein sequence ID" value="BAD58480.1"/>
    <property type="molecule type" value="Genomic_DNA"/>
</dbReference>
<dbReference type="RefSeq" id="WP_011210165.1">
    <property type="nucleotide sequence ID" value="NC_006361.1"/>
</dbReference>
<dbReference type="SMR" id="Q5YTL1"/>
<dbReference type="STRING" id="247156.NFA_36320"/>
<dbReference type="GeneID" id="61134328"/>
<dbReference type="KEGG" id="nfa:NFA_36320"/>
<dbReference type="eggNOG" id="COG0231">
    <property type="taxonomic scope" value="Bacteria"/>
</dbReference>
<dbReference type="HOGENOM" id="CLU_074944_0_1_11"/>
<dbReference type="OrthoDB" id="9801844at2"/>
<dbReference type="UniPathway" id="UPA00345"/>
<dbReference type="Proteomes" id="UP000006820">
    <property type="component" value="Chromosome"/>
</dbReference>
<dbReference type="GO" id="GO:0005737">
    <property type="term" value="C:cytoplasm"/>
    <property type="evidence" value="ECO:0007669"/>
    <property type="project" value="UniProtKB-SubCell"/>
</dbReference>
<dbReference type="GO" id="GO:0003746">
    <property type="term" value="F:translation elongation factor activity"/>
    <property type="evidence" value="ECO:0007669"/>
    <property type="project" value="UniProtKB-UniRule"/>
</dbReference>
<dbReference type="GO" id="GO:0043043">
    <property type="term" value="P:peptide biosynthetic process"/>
    <property type="evidence" value="ECO:0007669"/>
    <property type="project" value="InterPro"/>
</dbReference>
<dbReference type="CDD" id="cd04470">
    <property type="entry name" value="S1_EF-P_repeat_1"/>
    <property type="match status" value="1"/>
</dbReference>
<dbReference type="CDD" id="cd05794">
    <property type="entry name" value="S1_EF-P_repeat_2"/>
    <property type="match status" value="1"/>
</dbReference>
<dbReference type="FunFam" id="2.30.30.30:FF:000003">
    <property type="entry name" value="Elongation factor P"/>
    <property type="match status" value="1"/>
</dbReference>
<dbReference type="FunFam" id="2.40.50.140:FF:000004">
    <property type="entry name" value="Elongation factor P"/>
    <property type="match status" value="1"/>
</dbReference>
<dbReference type="FunFam" id="2.40.50.140:FF:000009">
    <property type="entry name" value="Elongation factor P"/>
    <property type="match status" value="1"/>
</dbReference>
<dbReference type="Gene3D" id="2.30.30.30">
    <property type="match status" value="1"/>
</dbReference>
<dbReference type="Gene3D" id="2.40.50.140">
    <property type="entry name" value="Nucleic acid-binding proteins"/>
    <property type="match status" value="2"/>
</dbReference>
<dbReference type="HAMAP" id="MF_00141">
    <property type="entry name" value="EF_P"/>
    <property type="match status" value="1"/>
</dbReference>
<dbReference type="InterPro" id="IPR015365">
    <property type="entry name" value="Elong-fact-P_C"/>
</dbReference>
<dbReference type="InterPro" id="IPR012340">
    <property type="entry name" value="NA-bd_OB-fold"/>
</dbReference>
<dbReference type="InterPro" id="IPR014722">
    <property type="entry name" value="Rib_uL2_dom2"/>
</dbReference>
<dbReference type="InterPro" id="IPR020599">
    <property type="entry name" value="Transl_elong_fac_P/YeiP"/>
</dbReference>
<dbReference type="InterPro" id="IPR013185">
    <property type="entry name" value="Transl_elong_KOW-like"/>
</dbReference>
<dbReference type="InterPro" id="IPR001059">
    <property type="entry name" value="Transl_elong_P/YeiP_cen"/>
</dbReference>
<dbReference type="InterPro" id="IPR013852">
    <property type="entry name" value="Transl_elong_P/YeiP_CS"/>
</dbReference>
<dbReference type="InterPro" id="IPR011768">
    <property type="entry name" value="Transl_elongation_fac_P"/>
</dbReference>
<dbReference type="InterPro" id="IPR008991">
    <property type="entry name" value="Translation_prot_SH3-like_sf"/>
</dbReference>
<dbReference type="NCBIfam" id="TIGR00038">
    <property type="entry name" value="efp"/>
    <property type="match status" value="1"/>
</dbReference>
<dbReference type="NCBIfam" id="NF001810">
    <property type="entry name" value="PRK00529.1"/>
    <property type="match status" value="1"/>
</dbReference>
<dbReference type="PANTHER" id="PTHR30053">
    <property type="entry name" value="ELONGATION FACTOR P"/>
    <property type="match status" value="1"/>
</dbReference>
<dbReference type="PANTHER" id="PTHR30053:SF12">
    <property type="entry name" value="ELONGATION FACTOR P (EF-P) FAMILY PROTEIN"/>
    <property type="match status" value="1"/>
</dbReference>
<dbReference type="Pfam" id="PF01132">
    <property type="entry name" value="EFP"/>
    <property type="match status" value="1"/>
</dbReference>
<dbReference type="Pfam" id="PF08207">
    <property type="entry name" value="EFP_N"/>
    <property type="match status" value="1"/>
</dbReference>
<dbReference type="Pfam" id="PF09285">
    <property type="entry name" value="Elong-fact-P_C"/>
    <property type="match status" value="1"/>
</dbReference>
<dbReference type="PIRSF" id="PIRSF005901">
    <property type="entry name" value="EF-P"/>
    <property type="match status" value="1"/>
</dbReference>
<dbReference type="SMART" id="SM01185">
    <property type="entry name" value="EFP"/>
    <property type="match status" value="1"/>
</dbReference>
<dbReference type="SMART" id="SM00841">
    <property type="entry name" value="Elong-fact-P_C"/>
    <property type="match status" value="1"/>
</dbReference>
<dbReference type="SUPFAM" id="SSF50249">
    <property type="entry name" value="Nucleic acid-binding proteins"/>
    <property type="match status" value="2"/>
</dbReference>
<dbReference type="SUPFAM" id="SSF50104">
    <property type="entry name" value="Translation proteins SH3-like domain"/>
    <property type="match status" value="1"/>
</dbReference>
<dbReference type="PROSITE" id="PS01275">
    <property type="entry name" value="EFP"/>
    <property type="match status" value="1"/>
</dbReference>
<feature type="chain" id="PRO_0000094297" description="Elongation factor P">
    <location>
        <begin position="1"/>
        <end position="187"/>
    </location>
</feature>
<protein>
    <recommendedName>
        <fullName evidence="1">Elongation factor P</fullName>
        <shortName evidence="1">EF-P</shortName>
    </recommendedName>
</protein>
<accession>Q5YTL1</accession>
<keyword id="KW-0963">Cytoplasm</keyword>
<keyword id="KW-0251">Elongation factor</keyword>
<keyword id="KW-0648">Protein biosynthesis</keyword>
<keyword id="KW-1185">Reference proteome</keyword>
<comment type="function">
    <text evidence="1">Involved in peptide bond synthesis. Stimulates efficient translation and peptide-bond synthesis on native or reconstituted 70S ribosomes in vitro. Probably functions indirectly by altering the affinity of the ribosome for aminoacyl-tRNA, thus increasing their reactivity as acceptors for peptidyl transferase.</text>
</comment>
<comment type="pathway">
    <text evidence="1">Protein biosynthesis; polypeptide chain elongation.</text>
</comment>
<comment type="subcellular location">
    <subcellularLocation>
        <location evidence="1">Cytoplasm</location>
    </subcellularLocation>
</comment>
<comment type="similarity">
    <text evidence="1">Belongs to the elongation factor P family.</text>
</comment>
<organism>
    <name type="scientific">Nocardia farcinica (strain IFM 10152)</name>
    <dbReference type="NCBI Taxonomy" id="247156"/>
    <lineage>
        <taxon>Bacteria</taxon>
        <taxon>Bacillati</taxon>
        <taxon>Actinomycetota</taxon>
        <taxon>Actinomycetes</taxon>
        <taxon>Mycobacteriales</taxon>
        <taxon>Nocardiaceae</taxon>
        <taxon>Nocardia</taxon>
    </lineage>
</organism>
<name>EFP_NOCFA</name>
<evidence type="ECO:0000255" key="1">
    <source>
        <dbReference type="HAMAP-Rule" id="MF_00141"/>
    </source>
</evidence>
<gene>
    <name evidence="1" type="primary">efp</name>
    <name type="ordered locus">NFA_36320</name>
</gene>